<comment type="catalytic activity">
    <reaction evidence="1">
        <text>D-glucose + ATP = D-glucose 6-phosphate + ADP + H(+)</text>
        <dbReference type="Rhea" id="RHEA:17825"/>
        <dbReference type="ChEBI" id="CHEBI:4167"/>
        <dbReference type="ChEBI" id="CHEBI:15378"/>
        <dbReference type="ChEBI" id="CHEBI:30616"/>
        <dbReference type="ChEBI" id="CHEBI:61548"/>
        <dbReference type="ChEBI" id="CHEBI:456216"/>
        <dbReference type="EC" id="2.7.1.2"/>
    </reaction>
</comment>
<comment type="subcellular location">
    <subcellularLocation>
        <location evidence="1">Cytoplasm</location>
    </subcellularLocation>
</comment>
<comment type="similarity">
    <text evidence="1">Belongs to the bacterial glucokinase family.</text>
</comment>
<name>GLK_NEIMF</name>
<protein>
    <recommendedName>
        <fullName evidence="1">Glucokinase</fullName>
        <ecNumber evidence="1">2.7.1.2</ecNumber>
    </recommendedName>
    <alternativeName>
        <fullName evidence="1">Glucose kinase</fullName>
    </alternativeName>
</protein>
<reference key="1">
    <citation type="journal article" date="2007" name="PLoS Genet.">
        <title>Meningococcal genetic variation mechanisms viewed through comparative analysis of serogroup C strain FAM18.</title>
        <authorList>
            <person name="Bentley S.D."/>
            <person name="Vernikos G.S."/>
            <person name="Snyder L.A.S."/>
            <person name="Churcher C."/>
            <person name="Arrowsmith C."/>
            <person name="Chillingworth T."/>
            <person name="Cronin A."/>
            <person name="Davis P.H."/>
            <person name="Holroyd N.E."/>
            <person name="Jagels K."/>
            <person name="Maddison M."/>
            <person name="Moule S."/>
            <person name="Rabbinowitsch E."/>
            <person name="Sharp S."/>
            <person name="Unwin L."/>
            <person name="Whitehead S."/>
            <person name="Quail M.A."/>
            <person name="Achtman M."/>
            <person name="Barrell B.G."/>
            <person name="Saunders N.J."/>
            <person name="Parkhill J."/>
        </authorList>
    </citation>
    <scope>NUCLEOTIDE SEQUENCE [LARGE SCALE GENOMIC DNA]</scope>
    <source>
        <strain>ATCC 700532 / DSM 15464 / FAM18</strain>
    </source>
</reference>
<evidence type="ECO:0000255" key="1">
    <source>
        <dbReference type="HAMAP-Rule" id="MF_00524"/>
    </source>
</evidence>
<organism>
    <name type="scientific">Neisseria meningitidis serogroup C / serotype 2a (strain ATCC 700532 / DSM 15464 / FAM18)</name>
    <dbReference type="NCBI Taxonomy" id="272831"/>
    <lineage>
        <taxon>Bacteria</taxon>
        <taxon>Pseudomonadati</taxon>
        <taxon>Pseudomonadota</taxon>
        <taxon>Betaproteobacteria</taxon>
        <taxon>Neisseriales</taxon>
        <taxon>Neisseriaceae</taxon>
        <taxon>Neisseria</taxon>
    </lineage>
</organism>
<sequence>MSSTPNKQAGYPRLVADIGGTNARFALETAPRVIEKAAVLPCKDYDTVTDAVRAYLNQSGATAVRHAAFAIANPILGDWVQMTNHHWAFSIETTRQTLGLDTLILLNDFTAQALAVTQTSSKDLMQVGGQKPVEFAPKAVIGPGTGLGVSGLVHSHAGWVALAGEGGHTSFPPFDDMEVLIWQYAKNKYGHVSAERFLSGAGLSLVYEALAAKQKAKPAKLMPSEITEKALSGASPLCRQTLDIFCAMLGTVASNLALTLGARGGVYLCGGIIPRVLEYFKTSPFRSRFENKGRFEAYLAAIPVYVVLSEFPGISGAAAALDNHLRNV</sequence>
<feature type="chain" id="PRO_1000050972" description="Glucokinase">
    <location>
        <begin position="1"/>
        <end position="328"/>
    </location>
</feature>
<feature type="binding site" evidence="1">
    <location>
        <begin position="16"/>
        <end position="21"/>
    </location>
    <ligand>
        <name>ATP</name>
        <dbReference type="ChEBI" id="CHEBI:30616"/>
    </ligand>
</feature>
<proteinExistence type="inferred from homology"/>
<gene>
    <name evidence="1" type="primary">glk</name>
    <name type="ordered locus">NMC1329</name>
</gene>
<accession>A1KUL0</accession>
<dbReference type="EC" id="2.7.1.2" evidence="1"/>
<dbReference type="EMBL" id="AM421808">
    <property type="protein sequence ID" value="CAM10555.1"/>
    <property type="molecule type" value="Genomic_DNA"/>
</dbReference>
<dbReference type="RefSeq" id="WP_002216974.1">
    <property type="nucleotide sequence ID" value="NC_008767.1"/>
</dbReference>
<dbReference type="SMR" id="A1KUL0"/>
<dbReference type="KEGG" id="nmc:NMC1329"/>
<dbReference type="HOGENOM" id="CLU_042582_1_0_4"/>
<dbReference type="Proteomes" id="UP000002286">
    <property type="component" value="Chromosome"/>
</dbReference>
<dbReference type="GO" id="GO:0005829">
    <property type="term" value="C:cytosol"/>
    <property type="evidence" value="ECO:0007669"/>
    <property type="project" value="TreeGrafter"/>
</dbReference>
<dbReference type="GO" id="GO:0005524">
    <property type="term" value="F:ATP binding"/>
    <property type="evidence" value="ECO:0007669"/>
    <property type="project" value="UniProtKB-UniRule"/>
</dbReference>
<dbReference type="GO" id="GO:0005536">
    <property type="term" value="F:D-glucose binding"/>
    <property type="evidence" value="ECO:0007669"/>
    <property type="project" value="InterPro"/>
</dbReference>
<dbReference type="GO" id="GO:0004340">
    <property type="term" value="F:glucokinase activity"/>
    <property type="evidence" value="ECO:0007669"/>
    <property type="project" value="UniProtKB-UniRule"/>
</dbReference>
<dbReference type="GO" id="GO:0006096">
    <property type="term" value="P:glycolytic process"/>
    <property type="evidence" value="ECO:0007669"/>
    <property type="project" value="UniProtKB-UniRule"/>
</dbReference>
<dbReference type="CDD" id="cd24008">
    <property type="entry name" value="ASKHA_NBD_GLK"/>
    <property type="match status" value="1"/>
</dbReference>
<dbReference type="FunFam" id="3.40.367.20:FF:000002">
    <property type="entry name" value="Glucokinase"/>
    <property type="match status" value="1"/>
</dbReference>
<dbReference type="Gene3D" id="3.30.420.40">
    <property type="match status" value="1"/>
</dbReference>
<dbReference type="Gene3D" id="3.40.367.20">
    <property type="match status" value="1"/>
</dbReference>
<dbReference type="HAMAP" id="MF_00524">
    <property type="entry name" value="Glucokinase"/>
    <property type="match status" value="1"/>
</dbReference>
<dbReference type="InterPro" id="IPR043129">
    <property type="entry name" value="ATPase_NBD"/>
</dbReference>
<dbReference type="InterPro" id="IPR050201">
    <property type="entry name" value="Bacterial_glucokinase"/>
</dbReference>
<dbReference type="InterPro" id="IPR003836">
    <property type="entry name" value="Glucokinase"/>
</dbReference>
<dbReference type="NCBIfam" id="TIGR00749">
    <property type="entry name" value="glk"/>
    <property type="match status" value="1"/>
</dbReference>
<dbReference type="NCBIfam" id="NF001416">
    <property type="entry name" value="PRK00292.1-3"/>
    <property type="match status" value="1"/>
</dbReference>
<dbReference type="PANTHER" id="PTHR47690">
    <property type="entry name" value="GLUCOKINASE"/>
    <property type="match status" value="1"/>
</dbReference>
<dbReference type="PANTHER" id="PTHR47690:SF1">
    <property type="entry name" value="GLUCOKINASE"/>
    <property type="match status" value="1"/>
</dbReference>
<dbReference type="Pfam" id="PF02685">
    <property type="entry name" value="Glucokinase"/>
    <property type="match status" value="1"/>
</dbReference>
<dbReference type="SUPFAM" id="SSF53067">
    <property type="entry name" value="Actin-like ATPase domain"/>
    <property type="match status" value="1"/>
</dbReference>
<keyword id="KW-0067">ATP-binding</keyword>
<keyword id="KW-0963">Cytoplasm</keyword>
<keyword id="KW-0324">Glycolysis</keyword>
<keyword id="KW-0418">Kinase</keyword>
<keyword id="KW-0547">Nucleotide-binding</keyword>
<keyword id="KW-0808">Transferase</keyword>